<proteinExistence type="inferred from homology"/>
<accession>B8G1G5</accession>
<feature type="chain" id="PRO_1000147225" description="Glucose-1-phosphate adenylyltransferase">
    <location>
        <begin position="1"/>
        <end position="398"/>
    </location>
</feature>
<feature type="binding site" evidence="1">
    <location>
        <position position="100"/>
    </location>
    <ligand>
        <name>alpha-D-glucose 1-phosphate</name>
        <dbReference type="ChEBI" id="CHEBI:58601"/>
    </ligand>
</feature>
<feature type="binding site" evidence="1">
    <location>
        <position position="165"/>
    </location>
    <ligand>
        <name>alpha-D-glucose 1-phosphate</name>
        <dbReference type="ChEBI" id="CHEBI:58601"/>
    </ligand>
</feature>
<feature type="binding site" evidence="1">
    <location>
        <begin position="180"/>
        <end position="181"/>
    </location>
    <ligand>
        <name>alpha-D-glucose 1-phosphate</name>
        <dbReference type="ChEBI" id="CHEBI:58601"/>
    </ligand>
</feature>
<feature type="binding site" evidence="1">
    <location>
        <position position="191"/>
    </location>
    <ligand>
        <name>alpha-D-glucose 1-phosphate</name>
        <dbReference type="ChEBI" id="CHEBI:58601"/>
    </ligand>
</feature>
<organism>
    <name type="scientific">Desulfitobacterium hafniense (strain DSM 10664 / DCB-2)</name>
    <dbReference type="NCBI Taxonomy" id="272564"/>
    <lineage>
        <taxon>Bacteria</taxon>
        <taxon>Bacillati</taxon>
        <taxon>Bacillota</taxon>
        <taxon>Clostridia</taxon>
        <taxon>Eubacteriales</taxon>
        <taxon>Desulfitobacteriaceae</taxon>
        <taxon>Desulfitobacterium</taxon>
    </lineage>
</organism>
<keyword id="KW-0067">ATP-binding</keyword>
<keyword id="KW-0119">Carbohydrate metabolism</keyword>
<keyword id="KW-0320">Glycogen biosynthesis</keyword>
<keyword id="KW-0321">Glycogen metabolism</keyword>
<keyword id="KW-0547">Nucleotide-binding</keyword>
<keyword id="KW-0548">Nucleotidyltransferase</keyword>
<keyword id="KW-0808">Transferase</keyword>
<protein>
    <recommendedName>
        <fullName evidence="1">Glucose-1-phosphate adenylyltransferase</fullName>
        <ecNumber evidence="1">2.7.7.27</ecNumber>
    </recommendedName>
    <alternativeName>
        <fullName evidence="1">ADP-glucose pyrophosphorylase</fullName>
        <shortName evidence="1">ADPGlc PPase</shortName>
    </alternativeName>
    <alternativeName>
        <fullName evidence="1">ADP-glucose synthase</fullName>
    </alternativeName>
</protein>
<gene>
    <name evidence="1" type="primary">glgC</name>
    <name type="ordered locus">Dhaf_3198</name>
</gene>
<comment type="function">
    <text evidence="1">Involved in the biosynthesis of ADP-glucose, a building block required for the elongation reactions to produce glycogen. Catalyzes the reaction between ATP and alpha-D-glucose 1-phosphate (G1P) to produce pyrophosphate and ADP-Glc.</text>
</comment>
<comment type="catalytic activity">
    <reaction evidence="1">
        <text>alpha-D-glucose 1-phosphate + ATP + H(+) = ADP-alpha-D-glucose + diphosphate</text>
        <dbReference type="Rhea" id="RHEA:12120"/>
        <dbReference type="ChEBI" id="CHEBI:15378"/>
        <dbReference type="ChEBI" id="CHEBI:30616"/>
        <dbReference type="ChEBI" id="CHEBI:33019"/>
        <dbReference type="ChEBI" id="CHEBI:57498"/>
        <dbReference type="ChEBI" id="CHEBI:58601"/>
        <dbReference type="EC" id="2.7.7.27"/>
    </reaction>
</comment>
<comment type="pathway">
    <text evidence="1">Glycan biosynthesis; glycogen biosynthesis.</text>
</comment>
<comment type="subunit">
    <text evidence="1">Homotetramer.</text>
</comment>
<comment type="similarity">
    <text evidence="1">Belongs to the bacterial/plant glucose-1-phosphate adenylyltransferase family.</text>
</comment>
<reference key="1">
    <citation type="journal article" date="2012" name="BMC Microbiol.">
        <title>Genome sequence of Desulfitobacterium hafniense DCB-2, a Gram-positive anaerobe capable of dehalogenation and metal reduction.</title>
        <authorList>
            <person name="Kim S.H."/>
            <person name="Harzman C."/>
            <person name="Davis J.K."/>
            <person name="Hutcheson R."/>
            <person name="Broderick J.B."/>
            <person name="Marsh T.L."/>
            <person name="Tiedje J.M."/>
        </authorList>
    </citation>
    <scope>NUCLEOTIDE SEQUENCE [LARGE SCALE GENOMIC DNA]</scope>
    <source>
        <strain>DSM 10664 / DCB-2</strain>
    </source>
</reference>
<sequence>MRKKECIAMLLAGGQGSRLGCLTRNIPKPAVSFAGKYRIIDFSLSNCSNSNIDTVGVLTQYKPFALNTYINMGSAWDLNCLNGGIHILPPFVGEAQGSWYKGTANAIYQNMDFINFYNPEYILILSGDHIYQMDYYEMLSCHKQKHAEVTLSAIAVPWEEASRFGVMVTDAGGRIIRFEEKPPRPESNLASMGVYIFNWDVLKEALLEDERDPQSDHDFGKNVLPRLLQQGRRLYSYLFHGYWRDVGTIESYYNANMEVLQEERVDKFFELKQRVFSNEEILAPQHLGERAKIHNSLIGNGCTILGEVRDSVIASGVYVGEGSLIEQSILLPNSEIYEDVRLHKTILGENAIVRAHCRIGDKREGNPPQEGITVIGDHLHIPEGTVISEGENVRKDTA</sequence>
<dbReference type="EC" id="2.7.7.27" evidence="1"/>
<dbReference type="EMBL" id="CP001336">
    <property type="protein sequence ID" value="ACL21218.1"/>
    <property type="molecule type" value="Genomic_DNA"/>
</dbReference>
<dbReference type="RefSeq" id="WP_015944466.1">
    <property type="nucleotide sequence ID" value="NC_011830.1"/>
</dbReference>
<dbReference type="SMR" id="B8G1G5"/>
<dbReference type="KEGG" id="dhd:Dhaf_3198"/>
<dbReference type="HOGENOM" id="CLU_029499_14_0_9"/>
<dbReference type="UniPathway" id="UPA00164"/>
<dbReference type="Proteomes" id="UP000007726">
    <property type="component" value="Chromosome"/>
</dbReference>
<dbReference type="GO" id="GO:0005524">
    <property type="term" value="F:ATP binding"/>
    <property type="evidence" value="ECO:0007669"/>
    <property type="project" value="UniProtKB-KW"/>
</dbReference>
<dbReference type="GO" id="GO:0008878">
    <property type="term" value="F:glucose-1-phosphate adenylyltransferase activity"/>
    <property type="evidence" value="ECO:0007669"/>
    <property type="project" value="UniProtKB-UniRule"/>
</dbReference>
<dbReference type="GO" id="GO:0005978">
    <property type="term" value="P:glycogen biosynthetic process"/>
    <property type="evidence" value="ECO:0007669"/>
    <property type="project" value="UniProtKB-UniRule"/>
</dbReference>
<dbReference type="CDD" id="cd02508">
    <property type="entry name" value="ADP_Glucose_PP"/>
    <property type="match status" value="1"/>
</dbReference>
<dbReference type="CDD" id="cd04651">
    <property type="entry name" value="LbH_G1P_AT_C"/>
    <property type="match status" value="1"/>
</dbReference>
<dbReference type="Gene3D" id="2.160.10.10">
    <property type="entry name" value="Hexapeptide repeat proteins"/>
    <property type="match status" value="1"/>
</dbReference>
<dbReference type="Gene3D" id="3.90.550.10">
    <property type="entry name" value="Spore Coat Polysaccharide Biosynthesis Protein SpsA, Chain A"/>
    <property type="match status" value="1"/>
</dbReference>
<dbReference type="HAMAP" id="MF_00624">
    <property type="entry name" value="GlgC"/>
    <property type="match status" value="1"/>
</dbReference>
<dbReference type="InterPro" id="IPR011831">
    <property type="entry name" value="ADP-Glc_PPase"/>
</dbReference>
<dbReference type="InterPro" id="IPR005836">
    <property type="entry name" value="ADP_Glu_pyroP_CS"/>
</dbReference>
<dbReference type="InterPro" id="IPR023049">
    <property type="entry name" value="GlgC_bac"/>
</dbReference>
<dbReference type="InterPro" id="IPR056818">
    <property type="entry name" value="GlmU/GlgC-like_hexapep"/>
</dbReference>
<dbReference type="InterPro" id="IPR005835">
    <property type="entry name" value="NTP_transferase_dom"/>
</dbReference>
<dbReference type="InterPro" id="IPR029044">
    <property type="entry name" value="Nucleotide-diphossugar_trans"/>
</dbReference>
<dbReference type="InterPro" id="IPR011004">
    <property type="entry name" value="Trimer_LpxA-like_sf"/>
</dbReference>
<dbReference type="NCBIfam" id="TIGR02091">
    <property type="entry name" value="glgC"/>
    <property type="match status" value="1"/>
</dbReference>
<dbReference type="NCBIfam" id="NF003670">
    <property type="entry name" value="PRK05293.1"/>
    <property type="match status" value="1"/>
</dbReference>
<dbReference type="PANTHER" id="PTHR43523:SF2">
    <property type="entry name" value="GLUCOSE-1-PHOSPHATE ADENYLYLTRANSFERASE"/>
    <property type="match status" value="1"/>
</dbReference>
<dbReference type="PANTHER" id="PTHR43523">
    <property type="entry name" value="GLUCOSE-1-PHOSPHATE ADENYLYLTRANSFERASE-RELATED"/>
    <property type="match status" value="1"/>
</dbReference>
<dbReference type="Pfam" id="PF24894">
    <property type="entry name" value="Hexapep_GlmU"/>
    <property type="match status" value="1"/>
</dbReference>
<dbReference type="Pfam" id="PF00483">
    <property type="entry name" value="NTP_transferase"/>
    <property type="match status" value="1"/>
</dbReference>
<dbReference type="SUPFAM" id="SSF53448">
    <property type="entry name" value="Nucleotide-diphospho-sugar transferases"/>
    <property type="match status" value="1"/>
</dbReference>
<dbReference type="SUPFAM" id="SSF51161">
    <property type="entry name" value="Trimeric LpxA-like enzymes"/>
    <property type="match status" value="1"/>
</dbReference>
<dbReference type="PROSITE" id="PS00809">
    <property type="entry name" value="ADP_GLC_PYROPHOSPH_2"/>
    <property type="match status" value="1"/>
</dbReference>
<dbReference type="PROSITE" id="PS00810">
    <property type="entry name" value="ADP_GLC_PYROPHOSPH_3"/>
    <property type="match status" value="1"/>
</dbReference>
<name>GLGC_DESHD</name>
<evidence type="ECO:0000255" key="1">
    <source>
        <dbReference type="HAMAP-Rule" id="MF_00624"/>
    </source>
</evidence>